<accession>B3WB42</accession>
<name>KDUI_LACCB</name>
<evidence type="ECO:0000255" key="1">
    <source>
        <dbReference type="HAMAP-Rule" id="MF_00687"/>
    </source>
</evidence>
<protein>
    <recommendedName>
        <fullName evidence="1">4-deoxy-L-threo-5-hexosulose-uronate ketol-isomerase</fullName>
        <ecNumber evidence="1">5.3.1.17</ecNumber>
    </recommendedName>
    <alternativeName>
        <fullName evidence="1">5-keto-4-deoxyuronate isomerase</fullName>
    </alternativeName>
    <alternativeName>
        <fullName evidence="1">DKI isomerase</fullName>
    </alternativeName>
</protein>
<dbReference type="EC" id="5.3.1.17" evidence="1"/>
<dbReference type="EMBL" id="FM177140">
    <property type="protein sequence ID" value="CAQ67911.1"/>
    <property type="molecule type" value="Genomic_DNA"/>
</dbReference>
<dbReference type="SMR" id="B3WB42"/>
<dbReference type="KEGG" id="lcb:LCABL_28610"/>
<dbReference type="HOGENOM" id="CLU_062609_0_0_9"/>
<dbReference type="UniPathway" id="UPA00545">
    <property type="reaction ID" value="UER00826"/>
</dbReference>
<dbReference type="GO" id="GO:0008697">
    <property type="term" value="F:4-deoxy-L-threo-5-hexosulose-uronate ketol-isomerase activity"/>
    <property type="evidence" value="ECO:0007669"/>
    <property type="project" value="UniProtKB-UniRule"/>
</dbReference>
<dbReference type="GO" id="GO:0008270">
    <property type="term" value="F:zinc ion binding"/>
    <property type="evidence" value="ECO:0007669"/>
    <property type="project" value="UniProtKB-UniRule"/>
</dbReference>
<dbReference type="GO" id="GO:0019698">
    <property type="term" value="P:D-galacturonate catabolic process"/>
    <property type="evidence" value="ECO:0007669"/>
    <property type="project" value="TreeGrafter"/>
</dbReference>
<dbReference type="GO" id="GO:0042840">
    <property type="term" value="P:D-glucuronate catabolic process"/>
    <property type="evidence" value="ECO:0007669"/>
    <property type="project" value="TreeGrafter"/>
</dbReference>
<dbReference type="GO" id="GO:0045490">
    <property type="term" value="P:pectin catabolic process"/>
    <property type="evidence" value="ECO:0007669"/>
    <property type="project" value="UniProtKB-UniRule"/>
</dbReference>
<dbReference type="CDD" id="cd20491">
    <property type="entry name" value="cupin_KduI_C"/>
    <property type="match status" value="1"/>
</dbReference>
<dbReference type="CDD" id="cd20294">
    <property type="entry name" value="cupin_KduI_N"/>
    <property type="match status" value="1"/>
</dbReference>
<dbReference type="Gene3D" id="2.60.120.10">
    <property type="entry name" value="Jelly Rolls"/>
    <property type="match status" value="1"/>
</dbReference>
<dbReference type="Gene3D" id="2.60.120.520">
    <property type="entry name" value="pectin degrading enzyme 5-keto 4- deoxyuronate isomerase, domain 1"/>
    <property type="match status" value="1"/>
</dbReference>
<dbReference type="HAMAP" id="MF_00687">
    <property type="entry name" value="KduI"/>
    <property type="match status" value="1"/>
</dbReference>
<dbReference type="InterPro" id="IPR007045">
    <property type="entry name" value="KduI"/>
</dbReference>
<dbReference type="InterPro" id="IPR021120">
    <property type="entry name" value="KduI/IolB_isomerase"/>
</dbReference>
<dbReference type="InterPro" id="IPR027449">
    <property type="entry name" value="KduI_N"/>
</dbReference>
<dbReference type="InterPro" id="IPR014710">
    <property type="entry name" value="RmlC-like_jellyroll"/>
</dbReference>
<dbReference type="InterPro" id="IPR011051">
    <property type="entry name" value="RmlC_Cupin_sf"/>
</dbReference>
<dbReference type="NCBIfam" id="NF002091">
    <property type="entry name" value="PRK00924.1"/>
    <property type="match status" value="1"/>
</dbReference>
<dbReference type="PANTHER" id="PTHR38461">
    <property type="entry name" value="4-DEOXY-L-THREO-5-HEXOSULOSE-URONATE KETOL-ISOMERASE"/>
    <property type="match status" value="1"/>
</dbReference>
<dbReference type="PANTHER" id="PTHR38461:SF1">
    <property type="entry name" value="4-DEOXY-L-THREO-5-HEXOSULOSE-URONATE KETOL-ISOMERASE"/>
    <property type="match status" value="1"/>
</dbReference>
<dbReference type="Pfam" id="PF04962">
    <property type="entry name" value="KduI"/>
    <property type="match status" value="1"/>
</dbReference>
<dbReference type="PIRSF" id="PIRSF006625">
    <property type="entry name" value="KduI"/>
    <property type="match status" value="1"/>
</dbReference>
<dbReference type="SUPFAM" id="SSF51182">
    <property type="entry name" value="RmlC-like cupins"/>
    <property type="match status" value="1"/>
</dbReference>
<sequence>MAFHMATRYAHSPEDIKHFDTTKLRQEFLMEKIFNAGDILLTYTYNDRMIFGGVVPTESSLEIKLSKELGVDFFLQCRELGVINIGGPGSIIVDGDKAAMVKQDGYYIGMGTKQVVFASDNPANPAKFYVVSTPAHKTYPNKKLPFANALAKPMGDQQHLNKRTIYKYIDASQMATCQLQMGYTVLEPGSSWNTMPAHTHARRMETYMYFDFAEPDTRVLHLLGESTETRHIALFNEQAVVNPSWSIHCGVGTTNYAFIWAMCGENQTYDDMDQVPMNELR</sequence>
<gene>
    <name evidence="1" type="primary">kduI</name>
    <name type="ordered locus">LCABL_28610</name>
</gene>
<reference key="1">
    <citation type="submission" date="2008-06" db="EMBL/GenBank/DDBJ databases">
        <title>Lactobacillus casei BL23 complete genome sequence.</title>
        <authorList>
            <person name="Maze A."/>
            <person name="Boel G."/>
            <person name="Bourand A."/>
            <person name="Loux V."/>
            <person name="Gibrat J.F."/>
            <person name="Zuniga M."/>
            <person name="Hartke A."/>
            <person name="Deutscher J."/>
        </authorList>
    </citation>
    <scope>NUCLEOTIDE SEQUENCE [LARGE SCALE GENOMIC DNA]</scope>
    <source>
        <strain>BL23</strain>
    </source>
</reference>
<comment type="function">
    <text evidence="1">Catalyzes the isomerization of 5-dehydro-4-deoxy-D-glucuronate to 3-deoxy-D-glycero-2,5-hexodiulosonate.</text>
</comment>
<comment type="catalytic activity">
    <reaction evidence="1">
        <text>5-dehydro-4-deoxy-D-glucuronate = 3-deoxy-D-glycero-2,5-hexodiulosonate</text>
        <dbReference type="Rhea" id="RHEA:23896"/>
        <dbReference type="ChEBI" id="CHEBI:17117"/>
        <dbReference type="ChEBI" id="CHEBI:29071"/>
        <dbReference type="EC" id="5.3.1.17"/>
    </reaction>
</comment>
<comment type="cofactor">
    <cofactor evidence="1">
        <name>Zn(2+)</name>
        <dbReference type="ChEBI" id="CHEBI:29105"/>
    </cofactor>
    <text evidence="1">Binds 1 zinc ion per subunit.</text>
</comment>
<comment type="pathway">
    <text evidence="1">Glycan metabolism; pectin degradation; 2-dehydro-3-deoxy-D-gluconate from pectin: step 4/5.</text>
</comment>
<comment type="similarity">
    <text evidence="1">Belongs to the KduI family.</text>
</comment>
<organism>
    <name type="scientific">Lacticaseibacillus casei (strain BL23)</name>
    <name type="common">Lactobacillus casei</name>
    <dbReference type="NCBI Taxonomy" id="543734"/>
    <lineage>
        <taxon>Bacteria</taxon>
        <taxon>Bacillati</taxon>
        <taxon>Bacillota</taxon>
        <taxon>Bacilli</taxon>
        <taxon>Lactobacillales</taxon>
        <taxon>Lactobacillaceae</taxon>
        <taxon>Lacticaseibacillus</taxon>
    </lineage>
</organism>
<proteinExistence type="inferred from homology"/>
<feature type="chain" id="PRO_1000131886" description="4-deoxy-L-threo-5-hexosulose-uronate ketol-isomerase">
    <location>
        <begin position="1"/>
        <end position="281"/>
    </location>
</feature>
<feature type="binding site" evidence="1">
    <location>
        <position position="198"/>
    </location>
    <ligand>
        <name>Zn(2+)</name>
        <dbReference type="ChEBI" id="CHEBI:29105"/>
    </ligand>
</feature>
<feature type="binding site" evidence="1">
    <location>
        <position position="200"/>
    </location>
    <ligand>
        <name>Zn(2+)</name>
        <dbReference type="ChEBI" id="CHEBI:29105"/>
    </ligand>
</feature>
<feature type="binding site" evidence="1">
    <location>
        <position position="205"/>
    </location>
    <ligand>
        <name>Zn(2+)</name>
        <dbReference type="ChEBI" id="CHEBI:29105"/>
    </ligand>
</feature>
<feature type="binding site" evidence="1">
    <location>
        <position position="248"/>
    </location>
    <ligand>
        <name>Zn(2+)</name>
        <dbReference type="ChEBI" id="CHEBI:29105"/>
    </ligand>
</feature>
<keyword id="KW-0413">Isomerase</keyword>
<keyword id="KW-0479">Metal-binding</keyword>
<keyword id="KW-0862">Zinc</keyword>